<organism>
    <name type="scientific">Streptococcus equi subsp. zooepidemicus (strain H70)</name>
    <dbReference type="NCBI Taxonomy" id="553483"/>
    <lineage>
        <taxon>Bacteria</taxon>
        <taxon>Bacillati</taxon>
        <taxon>Bacillota</taxon>
        <taxon>Bacilli</taxon>
        <taxon>Lactobacillales</taxon>
        <taxon>Streptococcaceae</taxon>
        <taxon>Streptococcus</taxon>
    </lineage>
</organism>
<protein>
    <recommendedName>
        <fullName evidence="1">Phosphatidylglycerol--prolipoprotein diacylglyceryl transferase</fullName>
        <ecNumber evidence="1">2.5.1.145</ecNumber>
    </recommendedName>
</protein>
<evidence type="ECO:0000255" key="1">
    <source>
        <dbReference type="HAMAP-Rule" id="MF_01147"/>
    </source>
</evidence>
<gene>
    <name evidence="1" type="primary">lgt</name>
    <name type="ordered locus">SZO_06140</name>
</gene>
<comment type="function">
    <text evidence="1">Catalyzes the transfer of the diacylglyceryl group from phosphatidylglycerol to the sulfhydryl group of the N-terminal cysteine of a prolipoprotein, the first step in the formation of mature lipoproteins.</text>
</comment>
<comment type="catalytic activity">
    <reaction evidence="1">
        <text>L-cysteinyl-[prolipoprotein] + a 1,2-diacyl-sn-glycero-3-phospho-(1'-sn-glycerol) = an S-1,2-diacyl-sn-glyceryl-L-cysteinyl-[prolipoprotein] + sn-glycerol 1-phosphate + H(+)</text>
        <dbReference type="Rhea" id="RHEA:56712"/>
        <dbReference type="Rhea" id="RHEA-COMP:14679"/>
        <dbReference type="Rhea" id="RHEA-COMP:14680"/>
        <dbReference type="ChEBI" id="CHEBI:15378"/>
        <dbReference type="ChEBI" id="CHEBI:29950"/>
        <dbReference type="ChEBI" id="CHEBI:57685"/>
        <dbReference type="ChEBI" id="CHEBI:64716"/>
        <dbReference type="ChEBI" id="CHEBI:140658"/>
        <dbReference type="EC" id="2.5.1.145"/>
    </reaction>
</comment>
<comment type="pathway">
    <text evidence="1">Protein modification; lipoprotein biosynthesis (diacylglyceryl transfer).</text>
</comment>
<comment type="subcellular location">
    <subcellularLocation>
        <location evidence="1">Cell membrane</location>
        <topology evidence="1">Multi-pass membrane protein</topology>
    </subcellularLocation>
</comment>
<comment type="similarity">
    <text evidence="1">Belongs to the Lgt family.</text>
</comment>
<feature type="chain" id="PRO_1000213659" description="Phosphatidylglycerol--prolipoprotein diacylglyceryl transferase">
    <location>
        <begin position="1"/>
        <end position="259"/>
    </location>
</feature>
<feature type="transmembrane region" description="Helical" evidence="1">
    <location>
        <begin position="12"/>
        <end position="32"/>
    </location>
</feature>
<feature type="transmembrane region" description="Helical" evidence="1">
    <location>
        <begin position="46"/>
        <end position="66"/>
    </location>
</feature>
<feature type="transmembrane region" description="Helical" evidence="1">
    <location>
        <begin position="83"/>
        <end position="103"/>
    </location>
</feature>
<feature type="transmembrane region" description="Helical" evidence="1">
    <location>
        <begin position="109"/>
        <end position="129"/>
    </location>
</feature>
<feature type="transmembrane region" description="Helical" evidence="1">
    <location>
        <begin position="167"/>
        <end position="187"/>
    </location>
</feature>
<feature type="transmembrane region" description="Helical" evidence="1">
    <location>
        <begin position="194"/>
        <end position="214"/>
    </location>
</feature>
<feature type="transmembrane region" description="Helical" evidence="1">
    <location>
        <begin position="226"/>
        <end position="246"/>
    </location>
</feature>
<feature type="binding site" evidence="1">
    <location>
        <position position="131"/>
    </location>
    <ligand>
        <name>a 1,2-diacyl-sn-glycero-3-phospho-(1'-sn-glycerol)</name>
        <dbReference type="ChEBI" id="CHEBI:64716"/>
    </ligand>
</feature>
<keyword id="KW-1003">Cell membrane</keyword>
<keyword id="KW-0472">Membrane</keyword>
<keyword id="KW-0808">Transferase</keyword>
<keyword id="KW-0812">Transmembrane</keyword>
<keyword id="KW-1133">Transmembrane helix</keyword>
<accession>C0MCZ9</accession>
<proteinExistence type="inferred from homology"/>
<sequence>MINPIAFKLGPLSLHWYAVCILVGLLLAVYLAAKEAPRKKMTSDDIIDFILIAFPLAIIGARIYYVAFEWSYYSQHLSDIFAIWNGGIAIYGGLITGTIVLFVYCYYKVLNPIHFLDIAAPSVMLAQAIGRWGNFFNQEAYGRAVSQLNYLPSFIRQQMFIDGSYRVPTFLYESMWNLIGFVIIMVWRRKPRSLLDGDIISFYLIWYGCGRLVIEGMRTDSLMLLGIRVSQYVSVLLIIIAIVFIFKRHRQKGISYYQE</sequence>
<reference key="1">
    <citation type="journal article" date="2009" name="PLoS Pathog.">
        <title>Genomic evidence for the evolution of Streptococcus equi: host restriction, increased virulence, and genetic exchange with human pathogens.</title>
        <authorList>
            <person name="Holden M.T.G."/>
            <person name="Heather Z."/>
            <person name="Paillot R."/>
            <person name="Steward K.F."/>
            <person name="Webb K."/>
            <person name="Ainslie F."/>
            <person name="Jourdan T."/>
            <person name="Bason N.C."/>
            <person name="Holroyd N.E."/>
            <person name="Mungall K."/>
            <person name="Quail M.A."/>
            <person name="Sanders M."/>
            <person name="Simmonds M."/>
            <person name="Willey D."/>
            <person name="Brooks K."/>
            <person name="Aanensen D.M."/>
            <person name="Spratt B.G."/>
            <person name="Jolley K.A."/>
            <person name="Maiden M.C.J."/>
            <person name="Kehoe M."/>
            <person name="Chanter N."/>
            <person name="Bentley S.D."/>
            <person name="Robinson C."/>
            <person name="Maskell D.J."/>
            <person name="Parkhill J."/>
            <person name="Waller A.S."/>
        </authorList>
    </citation>
    <scope>NUCLEOTIDE SEQUENCE [LARGE SCALE GENOMIC DNA]</scope>
    <source>
        <strain>H70</strain>
    </source>
</reference>
<dbReference type="EC" id="2.5.1.145" evidence="1"/>
<dbReference type="EMBL" id="FM204884">
    <property type="protein sequence ID" value="CAW98654.1"/>
    <property type="molecule type" value="Genomic_DNA"/>
</dbReference>
<dbReference type="SMR" id="C0MCZ9"/>
<dbReference type="KEGG" id="seq:SZO_06140"/>
<dbReference type="eggNOG" id="COG0682">
    <property type="taxonomic scope" value="Bacteria"/>
</dbReference>
<dbReference type="HOGENOM" id="CLU_013386_0_1_9"/>
<dbReference type="UniPathway" id="UPA00664"/>
<dbReference type="Proteomes" id="UP000001368">
    <property type="component" value="Chromosome"/>
</dbReference>
<dbReference type="GO" id="GO:0005886">
    <property type="term" value="C:plasma membrane"/>
    <property type="evidence" value="ECO:0007669"/>
    <property type="project" value="UniProtKB-SubCell"/>
</dbReference>
<dbReference type="GO" id="GO:0008961">
    <property type="term" value="F:phosphatidylglycerol-prolipoprotein diacylglyceryl transferase activity"/>
    <property type="evidence" value="ECO:0007669"/>
    <property type="project" value="UniProtKB-UniRule"/>
</dbReference>
<dbReference type="GO" id="GO:0042158">
    <property type="term" value="P:lipoprotein biosynthetic process"/>
    <property type="evidence" value="ECO:0007669"/>
    <property type="project" value="UniProtKB-UniRule"/>
</dbReference>
<dbReference type="HAMAP" id="MF_01147">
    <property type="entry name" value="Lgt"/>
    <property type="match status" value="1"/>
</dbReference>
<dbReference type="InterPro" id="IPR001640">
    <property type="entry name" value="Lgt"/>
</dbReference>
<dbReference type="NCBIfam" id="TIGR00544">
    <property type="entry name" value="lgt"/>
    <property type="match status" value="1"/>
</dbReference>
<dbReference type="PANTHER" id="PTHR30589:SF0">
    <property type="entry name" value="PHOSPHATIDYLGLYCEROL--PROLIPOPROTEIN DIACYLGLYCERYL TRANSFERASE"/>
    <property type="match status" value="1"/>
</dbReference>
<dbReference type="PANTHER" id="PTHR30589">
    <property type="entry name" value="PROLIPOPROTEIN DIACYLGLYCERYL TRANSFERASE"/>
    <property type="match status" value="1"/>
</dbReference>
<dbReference type="Pfam" id="PF01790">
    <property type="entry name" value="LGT"/>
    <property type="match status" value="1"/>
</dbReference>
<dbReference type="PROSITE" id="PS01311">
    <property type="entry name" value="LGT"/>
    <property type="match status" value="1"/>
</dbReference>
<name>LGT_STRS7</name>